<proteinExistence type="inferred from homology"/>
<accession>A9NAW7</accession>
<comment type="function">
    <text evidence="1">Specifically methylates the guanosine in position 1516 of 16S rRNA.</text>
</comment>
<comment type="catalytic activity">
    <reaction evidence="1">
        <text>guanosine(1516) in 16S rRNA + S-adenosyl-L-methionine = N(2)-methylguanosine(1516) in 16S rRNA + S-adenosyl-L-homocysteine + H(+)</text>
        <dbReference type="Rhea" id="RHEA:43220"/>
        <dbReference type="Rhea" id="RHEA-COMP:10412"/>
        <dbReference type="Rhea" id="RHEA-COMP:10413"/>
        <dbReference type="ChEBI" id="CHEBI:15378"/>
        <dbReference type="ChEBI" id="CHEBI:57856"/>
        <dbReference type="ChEBI" id="CHEBI:59789"/>
        <dbReference type="ChEBI" id="CHEBI:74269"/>
        <dbReference type="ChEBI" id="CHEBI:74481"/>
        <dbReference type="EC" id="2.1.1.242"/>
    </reaction>
</comment>
<comment type="subcellular location">
    <subcellularLocation>
        <location evidence="1">Cytoplasm</location>
    </subcellularLocation>
</comment>
<comment type="similarity">
    <text evidence="1">Belongs to the methyltransferase superfamily. RsmJ family.</text>
</comment>
<feature type="chain" id="PRO_1000087564" description="Ribosomal RNA small subunit methyltransferase J">
    <location>
        <begin position="1"/>
        <end position="254"/>
    </location>
</feature>
<feature type="binding site" evidence="1">
    <location>
        <begin position="107"/>
        <end position="108"/>
    </location>
    <ligand>
        <name>S-adenosyl-L-methionine</name>
        <dbReference type="ChEBI" id="CHEBI:59789"/>
    </ligand>
</feature>
<feature type="binding site" evidence="1">
    <location>
        <begin position="123"/>
        <end position="124"/>
    </location>
    <ligand>
        <name>S-adenosyl-L-methionine</name>
        <dbReference type="ChEBI" id="CHEBI:59789"/>
    </ligand>
</feature>
<feature type="binding site" evidence="1">
    <location>
        <position position="174"/>
    </location>
    <ligand>
        <name>S-adenosyl-L-methionine</name>
        <dbReference type="ChEBI" id="CHEBI:59789"/>
    </ligand>
</feature>
<gene>
    <name evidence="1" type="primary">rsmJ</name>
    <name type="ordered locus">COXBURSA331_A2080</name>
</gene>
<organism>
    <name type="scientific">Coxiella burnetii (strain RSA 331 / Henzerling II)</name>
    <dbReference type="NCBI Taxonomy" id="360115"/>
    <lineage>
        <taxon>Bacteria</taxon>
        <taxon>Pseudomonadati</taxon>
        <taxon>Pseudomonadota</taxon>
        <taxon>Gammaproteobacteria</taxon>
        <taxon>Legionellales</taxon>
        <taxon>Coxiellaceae</taxon>
        <taxon>Coxiella</taxon>
    </lineage>
</organism>
<dbReference type="EC" id="2.1.1.242" evidence="1"/>
<dbReference type="EMBL" id="CP000890">
    <property type="protein sequence ID" value="ABX77665.1"/>
    <property type="molecule type" value="Genomic_DNA"/>
</dbReference>
<dbReference type="RefSeq" id="WP_005770277.1">
    <property type="nucleotide sequence ID" value="NC_010117.1"/>
</dbReference>
<dbReference type="SMR" id="A9NAW7"/>
<dbReference type="KEGG" id="cbs:COXBURSA331_A2080"/>
<dbReference type="HOGENOM" id="CLU_076324_0_1_6"/>
<dbReference type="GO" id="GO:0005737">
    <property type="term" value="C:cytoplasm"/>
    <property type="evidence" value="ECO:0007669"/>
    <property type="project" value="UniProtKB-SubCell"/>
</dbReference>
<dbReference type="GO" id="GO:0008990">
    <property type="term" value="F:rRNA (guanine-N2-)-methyltransferase activity"/>
    <property type="evidence" value="ECO:0007669"/>
    <property type="project" value="UniProtKB-UniRule"/>
</dbReference>
<dbReference type="CDD" id="cd02440">
    <property type="entry name" value="AdoMet_MTases"/>
    <property type="match status" value="1"/>
</dbReference>
<dbReference type="Gene3D" id="3.40.50.150">
    <property type="entry name" value="Vaccinia Virus protein VP39"/>
    <property type="match status" value="1"/>
</dbReference>
<dbReference type="HAMAP" id="MF_01523">
    <property type="entry name" value="16SrRNA_methyltr_J"/>
    <property type="match status" value="1"/>
</dbReference>
<dbReference type="InterPro" id="IPR007536">
    <property type="entry name" value="16SrRNA_methylTrfase_J"/>
</dbReference>
<dbReference type="InterPro" id="IPR029063">
    <property type="entry name" value="SAM-dependent_MTases_sf"/>
</dbReference>
<dbReference type="PANTHER" id="PTHR36112">
    <property type="entry name" value="RIBOSOMAL RNA SMALL SUBUNIT METHYLTRANSFERASE J"/>
    <property type="match status" value="1"/>
</dbReference>
<dbReference type="PANTHER" id="PTHR36112:SF1">
    <property type="entry name" value="RIBOSOMAL RNA SMALL SUBUNIT METHYLTRANSFERASE J"/>
    <property type="match status" value="1"/>
</dbReference>
<dbReference type="Pfam" id="PF04445">
    <property type="entry name" value="SAM_MT"/>
    <property type="match status" value="1"/>
</dbReference>
<dbReference type="SUPFAM" id="SSF53335">
    <property type="entry name" value="S-adenosyl-L-methionine-dependent methyltransferases"/>
    <property type="match status" value="1"/>
</dbReference>
<name>RSMJ_COXBR</name>
<sequence>MNDTLAITYSTPARLSEAEKLARQMKLPLVSLNSTDYSFLLVFTPAHLELRSTGTKAPGPLYVDFLKGATAHRRLFGGGRSQLIVRAVGLKSHPHPTILDLTAGLGRDAFVLANLGCDVLMIERNPVIALLLRDGLERAQSVEWFKSLKLELIEIDAQIYLSTLKKQFDVIYMDPMYPIRKKSALVKKEMRILRRLVGADDDAPQLLALALKKAKHRVVIKRPRLSNPLPGPAPDVVYEGKSSRFDVYLLKPSS</sequence>
<keyword id="KW-0963">Cytoplasm</keyword>
<keyword id="KW-0489">Methyltransferase</keyword>
<keyword id="KW-0698">rRNA processing</keyword>
<keyword id="KW-0949">S-adenosyl-L-methionine</keyword>
<keyword id="KW-0808">Transferase</keyword>
<evidence type="ECO:0000255" key="1">
    <source>
        <dbReference type="HAMAP-Rule" id="MF_01523"/>
    </source>
</evidence>
<reference key="1">
    <citation type="submission" date="2007-11" db="EMBL/GenBank/DDBJ databases">
        <title>Genome sequencing of phylogenetically and phenotypically diverse Coxiella burnetii isolates.</title>
        <authorList>
            <person name="Seshadri R."/>
            <person name="Samuel J.E."/>
        </authorList>
    </citation>
    <scope>NUCLEOTIDE SEQUENCE [LARGE SCALE GENOMIC DNA]</scope>
    <source>
        <strain>RSA 331 / Henzerling II</strain>
    </source>
</reference>
<protein>
    <recommendedName>
        <fullName evidence="1">Ribosomal RNA small subunit methyltransferase J</fullName>
        <ecNumber evidence="1">2.1.1.242</ecNumber>
    </recommendedName>
    <alternativeName>
        <fullName evidence="1">16S rRNA m2G1516 methyltransferase</fullName>
    </alternativeName>
    <alternativeName>
        <fullName evidence="1">rRNA (guanine-N(2)-)-methyltransferase</fullName>
    </alternativeName>
</protein>